<dbReference type="EC" id="2.1.1.223" evidence="1"/>
<dbReference type="EMBL" id="CP001681">
    <property type="protein sequence ID" value="ACU05170.1"/>
    <property type="molecule type" value="Genomic_DNA"/>
</dbReference>
<dbReference type="RefSeq" id="WP_015808780.1">
    <property type="nucleotide sequence ID" value="NC_013061.1"/>
</dbReference>
<dbReference type="SMR" id="C6Y2G0"/>
<dbReference type="STRING" id="485917.Phep_2972"/>
<dbReference type="KEGG" id="phe:Phep_2972"/>
<dbReference type="eggNOG" id="COG4123">
    <property type="taxonomic scope" value="Bacteria"/>
</dbReference>
<dbReference type="HOGENOM" id="CLU_061983_0_0_10"/>
<dbReference type="OrthoDB" id="5383291at2"/>
<dbReference type="Proteomes" id="UP000000852">
    <property type="component" value="Chromosome"/>
</dbReference>
<dbReference type="GO" id="GO:0005737">
    <property type="term" value="C:cytoplasm"/>
    <property type="evidence" value="ECO:0007669"/>
    <property type="project" value="UniProtKB-SubCell"/>
</dbReference>
<dbReference type="GO" id="GO:0003676">
    <property type="term" value="F:nucleic acid binding"/>
    <property type="evidence" value="ECO:0007669"/>
    <property type="project" value="InterPro"/>
</dbReference>
<dbReference type="GO" id="GO:0016430">
    <property type="term" value="F:tRNA (adenine-N6)-methyltransferase activity"/>
    <property type="evidence" value="ECO:0007669"/>
    <property type="project" value="UniProtKB-UniRule"/>
</dbReference>
<dbReference type="GO" id="GO:0032259">
    <property type="term" value="P:methylation"/>
    <property type="evidence" value="ECO:0007669"/>
    <property type="project" value="UniProtKB-KW"/>
</dbReference>
<dbReference type="GO" id="GO:0008033">
    <property type="term" value="P:tRNA processing"/>
    <property type="evidence" value="ECO:0007669"/>
    <property type="project" value="UniProtKB-UniRule"/>
</dbReference>
<dbReference type="CDD" id="cd02440">
    <property type="entry name" value="AdoMet_MTases"/>
    <property type="match status" value="1"/>
</dbReference>
<dbReference type="Gene3D" id="3.40.50.150">
    <property type="entry name" value="Vaccinia Virus protein VP39"/>
    <property type="match status" value="1"/>
</dbReference>
<dbReference type="HAMAP" id="MF_01872">
    <property type="entry name" value="tRNA_methyltr_YfiC"/>
    <property type="match status" value="1"/>
</dbReference>
<dbReference type="InterPro" id="IPR002052">
    <property type="entry name" value="DNA_methylase_N6_adenine_CS"/>
</dbReference>
<dbReference type="InterPro" id="IPR029063">
    <property type="entry name" value="SAM-dependent_MTases_sf"/>
</dbReference>
<dbReference type="InterPro" id="IPR007848">
    <property type="entry name" value="Small_mtfrase_dom"/>
</dbReference>
<dbReference type="InterPro" id="IPR050210">
    <property type="entry name" value="tRNA_Adenine-N(6)_MTase"/>
</dbReference>
<dbReference type="InterPro" id="IPR022882">
    <property type="entry name" value="tRNA_adenine-N6_MeTrfase"/>
</dbReference>
<dbReference type="PANTHER" id="PTHR47739">
    <property type="entry name" value="TRNA1(VAL) (ADENINE(37)-N6)-METHYLTRANSFERASE"/>
    <property type="match status" value="1"/>
</dbReference>
<dbReference type="PANTHER" id="PTHR47739:SF1">
    <property type="entry name" value="TRNA1(VAL) (ADENINE(37)-N6)-METHYLTRANSFERASE"/>
    <property type="match status" value="1"/>
</dbReference>
<dbReference type="Pfam" id="PF05175">
    <property type="entry name" value="MTS"/>
    <property type="match status" value="1"/>
</dbReference>
<dbReference type="PRINTS" id="PR00507">
    <property type="entry name" value="N12N6MTFRASE"/>
</dbReference>
<dbReference type="SUPFAM" id="SSF53335">
    <property type="entry name" value="S-adenosyl-L-methionine-dependent methyltransferases"/>
    <property type="match status" value="1"/>
</dbReference>
<dbReference type="PROSITE" id="PS00092">
    <property type="entry name" value="N6_MTASE"/>
    <property type="match status" value="1"/>
</dbReference>
<reference key="1">
    <citation type="journal article" date="2009" name="Stand. Genomic Sci.">
        <title>Complete genome sequence of Pedobacter heparinus type strain (HIM 762-3).</title>
        <authorList>
            <person name="Han C."/>
            <person name="Spring S."/>
            <person name="Lapidus A."/>
            <person name="Del Rio T.G."/>
            <person name="Tice H."/>
            <person name="Copeland A."/>
            <person name="Cheng J.F."/>
            <person name="Lucas S."/>
            <person name="Chen F."/>
            <person name="Nolan M."/>
            <person name="Bruce D."/>
            <person name="Goodwin L."/>
            <person name="Pitluck S."/>
            <person name="Ivanova N."/>
            <person name="Mavromatis K."/>
            <person name="Mikhailova N."/>
            <person name="Pati A."/>
            <person name="Chen A."/>
            <person name="Palaniappan K."/>
            <person name="Land M."/>
            <person name="Hauser L."/>
            <person name="Chang Y.J."/>
            <person name="Jeffries C.C."/>
            <person name="Saunders E."/>
            <person name="Chertkov O."/>
            <person name="Brettin T."/>
            <person name="Goker M."/>
            <person name="Rohde M."/>
            <person name="Bristow J."/>
            <person name="Eisen J.A."/>
            <person name="Markowitz V."/>
            <person name="Hugenholtz P."/>
            <person name="Kyrpides N.C."/>
            <person name="Klenk H.P."/>
            <person name="Detter J.C."/>
        </authorList>
    </citation>
    <scope>NUCLEOTIDE SEQUENCE [LARGE SCALE GENOMIC DNA]</scope>
    <source>
        <strain>ATCC 13125 / DSM 2366 / CIP 104194 / JCM 7457 / NBRC 12017 / NCIMB 9290 / NRRL B-14731 / HIM 762-3</strain>
    </source>
</reference>
<accession>C6Y2G0</accession>
<name>TRMN6_PEDHD</name>
<proteinExistence type="inferred from homology"/>
<keyword id="KW-0963">Cytoplasm</keyword>
<keyword id="KW-0489">Methyltransferase</keyword>
<keyword id="KW-1185">Reference proteome</keyword>
<keyword id="KW-0949">S-adenosyl-L-methionine</keyword>
<keyword id="KW-0808">Transferase</keyword>
<keyword id="KW-0819">tRNA processing</keyword>
<evidence type="ECO:0000255" key="1">
    <source>
        <dbReference type="HAMAP-Rule" id="MF_01872"/>
    </source>
</evidence>
<sequence>MKNAFRFKQFEIDQTGCAMRINTDGVLLGAVAGKNEAANILDIGTGTGVIALMLAQRFPNALVDAVEIDEQAALTATKNALNAPFSGRLKVLHSAIEDYLPEKYYDLIVSNPPYFVNDLKNPEHRKGVARHTDAHFFEQLLERVAAMLSRDGRFWFILPLKQAQNIVDMAKFYGLGMAVVLHIHSDENKPEIRQIVCLDYSGQPAHHHNLYIYAGKGLYTDAYKVLLKDFFLAF</sequence>
<feature type="chain" id="PRO_0000387395" description="tRNA1(Val) (adenine(37)-N6)-methyltransferase">
    <location>
        <begin position="1"/>
        <end position="234"/>
    </location>
</feature>
<organism>
    <name type="scientific">Pedobacter heparinus (strain ATCC 13125 / DSM 2366 / CIP 104194 / JCM 7457 / NBRC 12017 / NCIMB 9290 / NRRL B-14731 / HIM 762-3)</name>
    <dbReference type="NCBI Taxonomy" id="485917"/>
    <lineage>
        <taxon>Bacteria</taxon>
        <taxon>Pseudomonadati</taxon>
        <taxon>Bacteroidota</taxon>
        <taxon>Sphingobacteriia</taxon>
        <taxon>Sphingobacteriales</taxon>
        <taxon>Sphingobacteriaceae</taxon>
        <taxon>Pedobacter</taxon>
    </lineage>
</organism>
<comment type="function">
    <text evidence="1">Specifically methylates the adenine in position 37 of tRNA(1)(Val) (anticodon cmo5UAC).</text>
</comment>
<comment type="catalytic activity">
    <reaction evidence="1">
        <text>adenosine(37) in tRNA1(Val) + S-adenosyl-L-methionine = N(6)-methyladenosine(37) in tRNA1(Val) + S-adenosyl-L-homocysteine + H(+)</text>
        <dbReference type="Rhea" id="RHEA:43160"/>
        <dbReference type="Rhea" id="RHEA-COMP:10369"/>
        <dbReference type="Rhea" id="RHEA-COMP:10370"/>
        <dbReference type="ChEBI" id="CHEBI:15378"/>
        <dbReference type="ChEBI" id="CHEBI:57856"/>
        <dbReference type="ChEBI" id="CHEBI:59789"/>
        <dbReference type="ChEBI" id="CHEBI:74411"/>
        <dbReference type="ChEBI" id="CHEBI:74449"/>
        <dbReference type="EC" id="2.1.1.223"/>
    </reaction>
</comment>
<comment type="subcellular location">
    <subcellularLocation>
        <location evidence="1">Cytoplasm</location>
    </subcellularLocation>
</comment>
<comment type="similarity">
    <text evidence="1">Belongs to the methyltransferase superfamily. tRNA (adenine-N(6)-)-methyltransferase family.</text>
</comment>
<gene>
    <name type="ordered locus">Phep_2972</name>
</gene>
<protein>
    <recommendedName>
        <fullName evidence="1">tRNA1(Val) (adenine(37)-N6)-methyltransferase</fullName>
        <ecNumber evidence="1">2.1.1.223</ecNumber>
    </recommendedName>
    <alternativeName>
        <fullName evidence="1">tRNA m6A37 methyltransferase</fullName>
    </alternativeName>
</protein>